<sequence>MRCLPVFVILLLLIASAPSVDARPKTKDDMPLASFHDNAKRILQILQDRNACCIVRQCC</sequence>
<keyword id="KW-0903">Direct protein sequencing</keyword>
<keyword id="KW-1015">Disulfide bond</keyword>
<keyword id="KW-0528">Neurotoxin</keyword>
<keyword id="KW-0964">Secreted</keyword>
<keyword id="KW-0732">Signal</keyword>
<keyword id="KW-0800">Toxin</keyword>
<comment type="subcellular location">
    <subcellularLocation>
        <location evidence="2">Secreted</location>
    </subcellularLocation>
</comment>
<comment type="tissue specificity">
    <text evidence="5">Expressed by the venom duct.</text>
</comment>
<comment type="domain">
    <text evidence="4">The cysteine framework is V (CC-CC).</text>
</comment>
<comment type="PTM">
    <text evidence="4">Contains 2 disulfide bonds that can be either 'C1-C3, C2-C4' or 'C1-C4, C2-C3', since these disulfide connectivities have been observed for conotoxins with cysteine framework V (for examples, see AC P0DQQ7 and AC P81755).</text>
</comment>
<comment type="mass spectrometry"/>
<comment type="similarity">
    <text evidence="4">Belongs to the conotoxin T superfamily.</text>
</comment>
<proteinExistence type="evidence at protein level"/>
<feature type="signal peptide" evidence="1">
    <location>
        <begin position="1"/>
        <end position="22"/>
    </location>
</feature>
<feature type="propeptide" id="PRO_0000035027" evidence="5">
    <location>
        <begin position="23"/>
        <end position="48"/>
    </location>
</feature>
<feature type="peptide" id="PRO_0000035028" description="Conotoxin mr5a" evidence="2">
    <location>
        <begin position="50"/>
        <end position="59"/>
    </location>
</feature>
<dbReference type="EMBL" id="BD270189">
    <property type="status" value="NOT_ANNOTATED_CDS"/>
    <property type="molecule type" value="Unassigned_DNA"/>
</dbReference>
<dbReference type="SMR" id="P69764"/>
<dbReference type="ConoServer" id="1714">
    <property type="toxin name" value="MrVA precursor"/>
</dbReference>
<dbReference type="GO" id="GO:0005576">
    <property type="term" value="C:extracellular region"/>
    <property type="evidence" value="ECO:0007669"/>
    <property type="project" value="UniProtKB-SubCell"/>
</dbReference>
<dbReference type="GO" id="GO:0090729">
    <property type="term" value="F:toxin activity"/>
    <property type="evidence" value="ECO:0007669"/>
    <property type="project" value="UniProtKB-KW"/>
</dbReference>
<dbReference type="InterPro" id="IPR031565">
    <property type="entry name" value="T-conotoxin"/>
</dbReference>
<dbReference type="Pfam" id="PF16981">
    <property type="entry name" value="Chi-conotoxin"/>
    <property type="match status" value="1"/>
</dbReference>
<name>CT5A_CONMR</name>
<accession>P69764</accession>
<evidence type="ECO:0000255" key="1"/>
<evidence type="ECO:0000269" key="2">
    <source>
    </source>
</evidence>
<evidence type="ECO:0000303" key="3">
    <source>
    </source>
</evidence>
<evidence type="ECO:0000305" key="4"/>
<evidence type="ECO:0000305" key="5">
    <source>
    </source>
</evidence>
<reference key="1">
    <citation type="patent" date="2003-10-07" number="US6630573">
        <title>Tau-conotoxin peptides.</title>
        <authorList>
            <person name="Walker C."/>
            <person name="Shetty R."/>
            <person name="Olivera B.M."/>
            <person name="Hooper D."/>
            <person name="Jacobsen R."/>
            <person name="Steele D."/>
            <person name="Jones R.M."/>
        </authorList>
    </citation>
    <scope>NUCLEOTIDE SEQUENCE [GENOMIC DNA]</scope>
</reference>
<reference key="2">
    <citation type="journal article" date="2005" name="Toxicon">
        <title>Sequence diversity of T-superfamily conotoxins from Conus marmoreus.</title>
        <authorList>
            <person name="Han Y.-H."/>
            <person name="Wang Q."/>
            <person name="Jiang H."/>
            <person name="Miao X.-W."/>
            <person name="Chen J.-S."/>
            <person name="Chi C.-W."/>
        </authorList>
    </citation>
    <scope>PROTEIN SEQUENCE OF 50-59</scope>
    <scope>MASS SPECTROMETRY</scope>
    <scope>SUBCELLULAR LOCATION</scope>
    <source>
        <tissue>Venom</tissue>
    </source>
</reference>
<organism>
    <name type="scientific">Conus marmoreus</name>
    <name type="common">Marble cone</name>
    <dbReference type="NCBI Taxonomy" id="42752"/>
    <lineage>
        <taxon>Eukaryota</taxon>
        <taxon>Metazoa</taxon>
        <taxon>Spiralia</taxon>
        <taxon>Lophotrochozoa</taxon>
        <taxon>Mollusca</taxon>
        <taxon>Gastropoda</taxon>
        <taxon>Caenogastropoda</taxon>
        <taxon>Neogastropoda</taxon>
        <taxon>Conoidea</taxon>
        <taxon>Conidae</taxon>
        <taxon>Conus</taxon>
    </lineage>
</organism>
<protein>
    <recommendedName>
        <fullName evidence="3">Conotoxin mr5a</fullName>
    </recommendedName>
</protein>